<sequence>MDRNPELAIADARPSQDGRAAPSRLDDAQLAELASRIKAWGRELGFGAIGISDTDLSEAEAGLAAWLEAGCHGEMDYMAKHGMKRARPAELVAGTRRVISARLAYLPAGTLDGAPDAQGARRDWRAREAARIADPQAAVVSVYARGRDYHKVLRNRLQTLAERIEAEIGAFGHRVFTDSAPVLEVELAQKAGVGWRGKHTLLLQRDAGSFFFLGEIYVDVPLPADAQTSPDAAPETPGAHCGSCTRCLGACPTGAIVAPYRVDARRCISYLTIELHGSIPEPLRPLIGNRVYGCDDCQLVCPWNKFAQAAPVADFDVRHGLDRASLVELFEWTAEQFDERMQGSAIRRIGYERWLRNLAVGLGNALRAAPGGIGPDARAAIVAALRARLDDPCVSALVREHVEWALRAA</sequence>
<dbReference type="EC" id="1.17.99.6" evidence="1"/>
<dbReference type="EMBL" id="BX571965">
    <property type="protein sequence ID" value="CAH34853.1"/>
    <property type="molecule type" value="Genomic_DNA"/>
</dbReference>
<dbReference type="RefSeq" id="WP_004550792.1">
    <property type="nucleotide sequence ID" value="NZ_CP009538.1"/>
</dbReference>
<dbReference type="RefSeq" id="YP_107486.1">
    <property type="nucleotide sequence ID" value="NC_006350.1"/>
</dbReference>
<dbReference type="SMR" id="Q63WN0"/>
<dbReference type="STRING" id="272560.BPSL0861"/>
<dbReference type="KEGG" id="bps:BPSL0861"/>
<dbReference type="PATRIC" id="fig|272560.51.peg.736"/>
<dbReference type="eggNOG" id="COG1600">
    <property type="taxonomic scope" value="Bacteria"/>
</dbReference>
<dbReference type="UniPathway" id="UPA00392"/>
<dbReference type="Proteomes" id="UP000000605">
    <property type="component" value="Chromosome 1"/>
</dbReference>
<dbReference type="GO" id="GO:0005737">
    <property type="term" value="C:cytoplasm"/>
    <property type="evidence" value="ECO:0007669"/>
    <property type="project" value="UniProtKB-SubCell"/>
</dbReference>
<dbReference type="GO" id="GO:0051539">
    <property type="term" value="F:4 iron, 4 sulfur cluster binding"/>
    <property type="evidence" value="ECO:0007669"/>
    <property type="project" value="UniProtKB-KW"/>
</dbReference>
<dbReference type="GO" id="GO:0052693">
    <property type="term" value="F:epoxyqueuosine reductase activity"/>
    <property type="evidence" value="ECO:0007669"/>
    <property type="project" value="UniProtKB-UniRule"/>
</dbReference>
<dbReference type="GO" id="GO:0046872">
    <property type="term" value="F:metal ion binding"/>
    <property type="evidence" value="ECO:0007669"/>
    <property type="project" value="UniProtKB-KW"/>
</dbReference>
<dbReference type="GO" id="GO:0008616">
    <property type="term" value="P:queuosine biosynthetic process"/>
    <property type="evidence" value="ECO:0007669"/>
    <property type="project" value="UniProtKB-UniRule"/>
</dbReference>
<dbReference type="GO" id="GO:0006400">
    <property type="term" value="P:tRNA modification"/>
    <property type="evidence" value="ECO:0007669"/>
    <property type="project" value="UniProtKB-UniRule"/>
</dbReference>
<dbReference type="FunFam" id="3.30.70.20:FF:000017">
    <property type="entry name" value="Epoxyqueuosine reductase"/>
    <property type="match status" value="1"/>
</dbReference>
<dbReference type="Gene3D" id="3.30.70.20">
    <property type="match status" value="1"/>
</dbReference>
<dbReference type="HAMAP" id="MF_00916">
    <property type="entry name" value="QueG"/>
    <property type="match status" value="1"/>
</dbReference>
<dbReference type="InterPro" id="IPR017896">
    <property type="entry name" value="4Fe4S_Fe-S-bd"/>
</dbReference>
<dbReference type="InterPro" id="IPR017900">
    <property type="entry name" value="4Fe4S_Fe_S_CS"/>
</dbReference>
<dbReference type="InterPro" id="IPR004453">
    <property type="entry name" value="QueG"/>
</dbReference>
<dbReference type="InterPro" id="IPR013542">
    <property type="entry name" value="QueG_DUF1730"/>
</dbReference>
<dbReference type="NCBIfam" id="TIGR00276">
    <property type="entry name" value="tRNA epoxyqueuosine(34) reductase QueG"/>
    <property type="match status" value="1"/>
</dbReference>
<dbReference type="PANTHER" id="PTHR30002">
    <property type="entry name" value="EPOXYQUEUOSINE REDUCTASE"/>
    <property type="match status" value="1"/>
</dbReference>
<dbReference type="PANTHER" id="PTHR30002:SF4">
    <property type="entry name" value="EPOXYQUEUOSINE REDUCTASE"/>
    <property type="match status" value="1"/>
</dbReference>
<dbReference type="Pfam" id="PF13484">
    <property type="entry name" value="Fer4_16"/>
    <property type="match status" value="1"/>
</dbReference>
<dbReference type="Pfam" id="PF08331">
    <property type="entry name" value="QueG_DUF1730"/>
    <property type="match status" value="1"/>
</dbReference>
<dbReference type="SUPFAM" id="SSF46548">
    <property type="entry name" value="alpha-helical ferredoxin"/>
    <property type="match status" value="1"/>
</dbReference>
<dbReference type="PROSITE" id="PS00198">
    <property type="entry name" value="4FE4S_FER_1"/>
    <property type="match status" value="1"/>
</dbReference>
<dbReference type="PROSITE" id="PS51379">
    <property type="entry name" value="4FE4S_FER_2"/>
    <property type="match status" value="1"/>
</dbReference>
<reference key="1">
    <citation type="journal article" date="2004" name="Proc. Natl. Acad. Sci. U.S.A.">
        <title>Genomic plasticity of the causative agent of melioidosis, Burkholderia pseudomallei.</title>
        <authorList>
            <person name="Holden M.T.G."/>
            <person name="Titball R.W."/>
            <person name="Peacock S.J."/>
            <person name="Cerdeno-Tarraga A.-M."/>
            <person name="Atkins T."/>
            <person name="Crossman L.C."/>
            <person name="Pitt T."/>
            <person name="Churcher C."/>
            <person name="Mungall K.L."/>
            <person name="Bentley S.D."/>
            <person name="Sebaihia M."/>
            <person name="Thomson N.R."/>
            <person name="Bason N."/>
            <person name="Beacham I.R."/>
            <person name="Brooks K."/>
            <person name="Brown K.A."/>
            <person name="Brown N.F."/>
            <person name="Challis G.L."/>
            <person name="Cherevach I."/>
            <person name="Chillingworth T."/>
            <person name="Cronin A."/>
            <person name="Crossett B."/>
            <person name="Davis P."/>
            <person name="DeShazer D."/>
            <person name="Feltwell T."/>
            <person name="Fraser A."/>
            <person name="Hance Z."/>
            <person name="Hauser H."/>
            <person name="Holroyd S."/>
            <person name="Jagels K."/>
            <person name="Keith K.E."/>
            <person name="Maddison M."/>
            <person name="Moule S."/>
            <person name="Price C."/>
            <person name="Quail M.A."/>
            <person name="Rabbinowitsch E."/>
            <person name="Rutherford K."/>
            <person name="Sanders M."/>
            <person name="Simmonds M."/>
            <person name="Songsivilai S."/>
            <person name="Stevens K."/>
            <person name="Tumapa S."/>
            <person name="Vesaratchavest M."/>
            <person name="Whitehead S."/>
            <person name="Yeats C."/>
            <person name="Barrell B.G."/>
            <person name="Oyston P.C.F."/>
            <person name="Parkhill J."/>
        </authorList>
    </citation>
    <scope>NUCLEOTIDE SEQUENCE [LARGE SCALE GENOMIC DNA]</scope>
    <source>
        <strain>K96243</strain>
    </source>
</reference>
<evidence type="ECO:0000255" key="1">
    <source>
        <dbReference type="HAMAP-Rule" id="MF_00916"/>
    </source>
</evidence>
<evidence type="ECO:0000256" key="2">
    <source>
        <dbReference type="SAM" id="MobiDB-lite"/>
    </source>
</evidence>
<comment type="function">
    <text evidence="1">Catalyzes the conversion of epoxyqueuosine (oQ) to queuosine (Q), which is a hypermodified base found in the wobble positions of tRNA(Asp), tRNA(Asn), tRNA(His) and tRNA(Tyr).</text>
</comment>
<comment type="catalytic activity">
    <reaction evidence="1">
        <text>epoxyqueuosine(34) in tRNA + AH2 = queuosine(34) in tRNA + A + H2O</text>
        <dbReference type="Rhea" id="RHEA:32159"/>
        <dbReference type="Rhea" id="RHEA-COMP:18571"/>
        <dbReference type="Rhea" id="RHEA-COMP:18582"/>
        <dbReference type="ChEBI" id="CHEBI:13193"/>
        <dbReference type="ChEBI" id="CHEBI:15377"/>
        <dbReference type="ChEBI" id="CHEBI:17499"/>
        <dbReference type="ChEBI" id="CHEBI:194431"/>
        <dbReference type="ChEBI" id="CHEBI:194443"/>
        <dbReference type="EC" id="1.17.99.6"/>
    </reaction>
</comment>
<comment type="cofactor">
    <cofactor evidence="1">
        <name>cob(II)alamin</name>
        <dbReference type="ChEBI" id="CHEBI:16304"/>
    </cofactor>
</comment>
<comment type="cofactor">
    <cofactor evidence="1">
        <name>[4Fe-4S] cluster</name>
        <dbReference type="ChEBI" id="CHEBI:49883"/>
    </cofactor>
    <text evidence="1">Binds 2 [4Fe-4S] clusters per monomer.</text>
</comment>
<comment type="pathway">
    <text evidence="1">tRNA modification; tRNA-queuosine biosynthesis.</text>
</comment>
<comment type="subunit">
    <text evidence="1">Monomer.</text>
</comment>
<comment type="subcellular location">
    <subcellularLocation>
        <location evidence="1">Cytoplasm</location>
    </subcellularLocation>
</comment>
<comment type="similarity">
    <text evidence="1">Belongs to the QueG family.</text>
</comment>
<proteinExistence type="inferred from homology"/>
<gene>
    <name evidence="1" type="primary">queG</name>
    <name type="ordered locus">BPSL0861</name>
</gene>
<name>QUEG_BURPS</name>
<accession>Q63WN0</accession>
<keyword id="KW-0004">4Fe-4S</keyword>
<keyword id="KW-0963">Cytoplasm</keyword>
<keyword id="KW-0408">Iron</keyword>
<keyword id="KW-0411">Iron-sulfur</keyword>
<keyword id="KW-0479">Metal-binding</keyword>
<keyword id="KW-0560">Oxidoreductase</keyword>
<keyword id="KW-0671">Queuosine biosynthesis</keyword>
<keyword id="KW-1185">Reference proteome</keyword>
<keyword id="KW-0819">tRNA processing</keyword>
<protein>
    <recommendedName>
        <fullName evidence="1">Epoxyqueuosine reductase</fullName>
        <ecNumber evidence="1">1.17.99.6</ecNumber>
    </recommendedName>
    <alternativeName>
        <fullName evidence="1">Queuosine biosynthesis protein QueG</fullName>
    </alternativeName>
</protein>
<feature type="chain" id="PRO_0000416066" description="Epoxyqueuosine reductase">
    <location>
        <begin position="1"/>
        <end position="409"/>
    </location>
</feature>
<feature type="domain" description="4Fe-4S ferredoxin-type" evidence="1">
    <location>
        <begin position="232"/>
        <end position="261"/>
    </location>
</feature>
<feature type="region of interest" description="Disordered" evidence="2">
    <location>
        <begin position="1"/>
        <end position="23"/>
    </location>
</feature>
<feature type="active site" description="Proton donor" evidence="1">
    <location>
        <position position="178"/>
    </location>
</feature>
<feature type="binding site" evidence="1">
    <location>
        <position position="241"/>
    </location>
    <ligand>
        <name>[4Fe-4S] cluster</name>
        <dbReference type="ChEBI" id="CHEBI:49883"/>
        <label>1</label>
    </ligand>
</feature>
<feature type="binding site" evidence="1">
    <location>
        <position position="244"/>
    </location>
    <ligand>
        <name>[4Fe-4S] cluster</name>
        <dbReference type="ChEBI" id="CHEBI:49883"/>
        <label>1</label>
    </ligand>
</feature>
<feature type="binding site" evidence="1">
    <location>
        <position position="247"/>
    </location>
    <ligand>
        <name>[4Fe-4S] cluster</name>
        <dbReference type="ChEBI" id="CHEBI:49883"/>
        <label>1</label>
    </ligand>
</feature>
<feature type="binding site" evidence="1">
    <location>
        <position position="251"/>
    </location>
    <ligand>
        <name>[4Fe-4S] cluster</name>
        <dbReference type="ChEBI" id="CHEBI:49883"/>
        <label>2</label>
    </ligand>
</feature>
<feature type="binding site" evidence="1">
    <location>
        <position position="267"/>
    </location>
    <ligand>
        <name>[4Fe-4S] cluster</name>
        <dbReference type="ChEBI" id="CHEBI:49883"/>
        <label>2</label>
    </ligand>
</feature>
<feature type="binding site" evidence="1">
    <location>
        <position position="294"/>
    </location>
    <ligand>
        <name>[4Fe-4S] cluster</name>
        <dbReference type="ChEBI" id="CHEBI:49883"/>
        <label>2</label>
    </ligand>
</feature>
<feature type="binding site" evidence="1">
    <location>
        <position position="297"/>
    </location>
    <ligand>
        <name>[4Fe-4S] cluster</name>
        <dbReference type="ChEBI" id="CHEBI:49883"/>
        <label>2</label>
    </ligand>
</feature>
<feature type="binding site" evidence="1">
    <location>
        <position position="301"/>
    </location>
    <ligand>
        <name>[4Fe-4S] cluster</name>
        <dbReference type="ChEBI" id="CHEBI:49883"/>
        <label>1</label>
    </ligand>
</feature>
<organism>
    <name type="scientific">Burkholderia pseudomallei (strain K96243)</name>
    <dbReference type="NCBI Taxonomy" id="272560"/>
    <lineage>
        <taxon>Bacteria</taxon>
        <taxon>Pseudomonadati</taxon>
        <taxon>Pseudomonadota</taxon>
        <taxon>Betaproteobacteria</taxon>
        <taxon>Burkholderiales</taxon>
        <taxon>Burkholderiaceae</taxon>
        <taxon>Burkholderia</taxon>
        <taxon>pseudomallei group</taxon>
    </lineage>
</organism>